<geneLocation type="plasmid">
    <name>pVI150</name>
</geneLocation>
<protein>
    <recommendedName>
        <fullName>2-hydroxymuconate tautomerase</fullName>
        <ecNumber>5.3.2.6</ecNumber>
    </recommendedName>
    <alternativeName>
        <fullName>4-oxalocrotonate tautomerase</fullName>
        <shortName>4-OT</shortName>
    </alternativeName>
</protein>
<proteinExistence type="evidence at protein level"/>
<keyword id="KW-0002">3D-structure</keyword>
<keyword id="KW-0058">Aromatic hydrocarbons catabolism</keyword>
<keyword id="KW-0413">Isomerase</keyword>
<keyword id="KW-0614">Plasmid</keyword>
<organism>
    <name type="scientific">Pseudomonas sp. (strain CF600)</name>
    <dbReference type="NCBI Taxonomy" id="79676"/>
    <lineage>
        <taxon>Bacteria</taxon>
        <taxon>Pseudomonadati</taxon>
        <taxon>Pseudomonadota</taxon>
    </lineage>
</organism>
<dbReference type="EC" id="5.3.2.6"/>
<dbReference type="EMBL" id="X60835">
    <property type="protein sequence ID" value="CAA43229.1"/>
    <property type="molecule type" value="Genomic_DNA"/>
</dbReference>
<dbReference type="PDB" id="1OTF">
    <property type="method" value="X-ray"/>
    <property type="resolution" value="1.90 A"/>
    <property type="chains" value="A/B/C/D/E/F=2-63"/>
</dbReference>
<dbReference type="PDBsum" id="1OTF"/>
<dbReference type="SMR" id="P49172"/>
<dbReference type="BRENDA" id="5.3.2.6">
    <property type="organism ID" value="5085"/>
</dbReference>
<dbReference type="UniPathway" id="UPA00273"/>
<dbReference type="EvolutionaryTrace" id="P49172"/>
<dbReference type="GO" id="GO:0016853">
    <property type="term" value="F:isomerase activity"/>
    <property type="evidence" value="ECO:0007669"/>
    <property type="project" value="UniProtKB-KW"/>
</dbReference>
<dbReference type="GO" id="GO:0042203">
    <property type="term" value="P:toluene catabolic process"/>
    <property type="evidence" value="ECO:0007669"/>
    <property type="project" value="UniProtKB-UniPathway"/>
</dbReference>
<dbReference type="CDD" id="cd00491">
    <property type="entry name" value="4Oxalocrotonate_Tautomerase"/>
    <property type="match status" value="1"/>
</dbReference>
<dbReference type="Gene3D" id="3.30.429.10">
    <property type="entry name" value="Macrophage Migration Inhibitory Factor"/>
    <property type="match status" value="1"/>
</dbReference>
<dbReference type="InterPro" id="IPR018191">
    <property type="entry name" value="4-OT"/>
</dbReference>
<dbReference type="InterPro" id="IPR004370">
    <property type="entry name" value="4-OT-like_dom"/>
</dbReference>
<dbReference type="InterPro" id="IPR014347">
    <property type="entry name" value="Tautomerase/MIF_sf"/>
</dbReference>
<dbReference type="NCBIfam" id="NF002571">
    <property type="entry name" value="PRK02220.1"/>
    <property type="match status" value="1"/>
</dbReference>
<dbReference type="NCBIfam" id="TIGR00013">
    <property type="entry name" value="taut"/>
    <property type="match status" value="1"/>
</dbReference>
<dbReference type="PANTHER" id="PTHR35530:SF1">
    <property type="entry name" value="2-HYDROXYMUCONATE TAUTOMERASE"/>
    <property type="match status" value="1"/>
</dbReference>
<dbReference type="PANTHER" id="PTHR35530">
    <property type="entry name" value="TAUTOMERASE-RELATED"/>
    <property type="match status" value="1"/>
</dbReference>
<dbReference type="Pfam" id="PF01361">
    <property type="entry name" value="Tautomerase"/>
    <property type="match status" value="1"/>
</dbReference>
<dbReference type="SUPFAM" id="SSF55331">
    <property type="entry name" value="Tautomerase/MIF"/>
    <property type="match status" value="1"/>
</dbReference>
<reference key="1">
    <citation type="journal article" date="1992" name="J. Bacteriol.">
        <title>Nucleotide sequence and functional analysis of the complete phenol/3,4-dimethylphenol catabolic pathway of Pseudomonas sp. strain CF600.</title>
        <authorList>
            <person name="Shingler V."/>
            <person name="Marklund U."/>
            <person name="Powlowski J."/>
        </authorList>
    </citation>
    <scope>NUCLEOTIDE SEQUENCE [GENOMIC DNA]</scope>
</reference>
<reference key="2">
    <citation type="journal article" date="1996" name="Biochemistry">
        <title>Enzymatic ketonization of 2-hydroxymuconate: specificity and mechanism investigated by the crystal structures of two isomerases.</title>
        <authorList>
            <person name="Subramanya H.S."/>
            <person name="Roper D.I."/>
            <person name="Dauter Z."/>
            <person name="Dodson E.J."/>
            <person name="Davies G.J."/>
            <person name="Wilson K.S."/>
            <person name="Wigley D.B."/>
        </authorList>
    </citation>
    <scope>X-RAY CRYSTALLOGRAPHY (1.9 ANGSTROMS)</scope>
</reference>
<gene>
    <name type="primary">dmpI</name>
</gene>
<feature type="initiator methionine" description="Removed" evidence="1">
    <location>
        <position position="1"/>
    </location>
</feature>
<feature type="chain" id="PRO_0000209513" description="2-hydroxymuconate tautomerase">
    <location>
        <begin position="2"/>
        <end position="63"/>
    </location>
</feature>
<feature type="active site" description="Proton acceptor; via imino nitrogen" evidence="1">
    <location>
        <position position="2"/>
    </location>
</feature>
<feature type="strand" evidence="3">
    <location>
        <begin position="3"/>
        <end position="10"/>
    </location>
</feature>
<feature type="helix" evidence="3">
    <location>
        <begin position="14"/>
        <end position="32"/>
    </location>
</feature>
<feature type="helix" evidence="3">
    <location>
        <begin position="36"/>
        <end position="38"/>
    </location>
</feature>
<feature type="strand" evidence="3">
    <location>
        <begin position="40"/>
        <end position="46"/>
    </location>
</feature>
<feature type="helix" evidence="3">
    <location>
        <begin position="48"/>
        <end position="50"/>
    </location>
</feature>
<feature type="strand" evidence="3">
    <location>
        <begin position="51"/>
        <end position="53"/>
    </location>
</feature>
<name>4OT_PSEUF</name>
<accession>P49172</accession>
<sequence>MPIAQLYIIEGRTDEQKETLIRQVSEAMANSLDAPLERVRVLITEMPKNHFGIGGEPASKVRR</sequence>
<evidence type="ECO:0000250" key="1"/>
<evidence type="ECO:0000305" key="2"/>
<evidence type="ECO:0007829" key="3">
    <source>
        <dbReference type="PDB" id="1OTF"/>
    </source>
</evidence>
<comment type="function">
    <text>Catalyzes the ketonization of 2-hydroxymuconate stereoselectively to yield 2-oxo-3-hexenedioate.</text>
</comment>
<comment type="catalytic activity">
    <reaction>
        <text>(2Z,4E)-2-hydroxyhexa-2,4-dienedioate = (3E)-2-oxohex-3-enedioate</text>
        <dbReference type="Rhea" id="RHEA:33431"/>
        <dbReference type="ChEBI" id="CHEBI:28080"/>
        <dbReference type="ChEBI" id="CHEBI:64908"/>
        <dbReference type="EC" id="5.3.2.6"/>
    </reaction>
</comment>
<comment type="pathway">
    <text>Xenobiotic degradation; toluene degradation.</text>
</comment>
<comment type="subunit">
    <text>Homohexamer.</text>
</comment>
<comment type="similarity">
    <text evidence="2">Belongs to the 4-oxalocrotonate tautomerase family.</text>
</comment>